<keyword id="KW-0963">Cytoplasm</keyword>
<keyword id="KW-0444">Lipid biosynthesis</keyword>
<keyword id="KW-0443">Lipid metabolism</keyword>
<keyword id="KW-0520">NAD</keyword>
<keyword id="KW-0521">NADP</keyword>
<keyword id="KW-0547">Nucleotide-binding</keyword>
<keyword id="KW-0560">Oxidoreductase</keyword>
<keyword id="KW-0594">Phospholipid biosynthesis</keyword>
<keyword id="KW-1208">Phospholipid metabolism</keyword>
<keyword id="KW-1185">Reference proteome</keyword>
<gene>
    <name evidence="1" type="primary">gpsA</name>
    <name type="ordered locus">NFA_42060</name>
</gene>
<accession>Q5YRY6</accession>
<name>GPDA_NOCFA</name>
<dbReference type="EC" id="1.1.1.94" evidence="1"/>
<dbReference type="EMBL" id="AP006618">
    <property type="protein sequence ID" value="BAD59055.1"/>
    <property type="molecule type" value="Genomic_DNA"/>
</dbReference>
<dbReference type="RefSeq" id="WP_011210740.1">
    <property type="nucleotide sequence ID" value="NC_006361.1"/>
</dbReference>
<dbReference type="SMR" id="Q5YRY6"/>
<dbReference type="STRING" id="247156.NFA_42060"/>
<dbReference type="GeneID" id="61134840"/>
<dbReference type="KEGG" id="nfa:NFA_42060"/>
<dbReference type="eggNOG" id="COG0240">
    <property type="taxonomic scope" value="Bacteria"/>
</dbReference>
<dbReference type="HOGENOM" id="CLU_033449_0_2_11"/>
<dbReference type="OrthoDB" id="9812273at2"/>
<dbReference type="UniPathway" id="UPA00940"/>
<dbReference type="Proteomes" id="UP000006820">
    <property type="component" value="Chromosome"/>
</dbReference>
<dbReference type="GO" id="GO:0005829">
    <property type="term" value="C:cytosol"/>
    <property type="evidence" value="ECO:0007669"/>
    <property type="project" value="TreeGrafter"/>
</dbReference>
<dbReference type="GO" id="GO:0047952">
    <property type="term" value="F:glycerol-3-phosphate dehydrogenase [NAD(P)+] activity"/>
    <property type="evidence" value="ECO:0007669"/>
    <property type="project" value="UniProtKB-UniRule"/>
</dbReference>
<dbReference type="GO" id="GO:0051287">
    <property type="term" value="F:NAD binding"/>
    <property type="evidence" value="ECO:0007669"/>
    <property type="project" value="InterPro"/>
</dbReference>
<dbReference type="GO" id="GO:0005975">
    <property type="term" value="P:carbohydrate metabolic process"/>
    <property type="evidence" value="ECO:0007669"/>
    <property type="project" value="InterPro"/>
</dbReference>
<dbReference type="GO" id="GO:0046167">
    <property type="term" value="P:glycerol-3-phosphate biosynthetic process"/>
    <property type="evidence" value="ECO:0007669"/>
    <property type="project" value="UniProtKB-UniRule"/>
</dbReference>
<dbReference type="GO" id="GO:0046168">
    <property type="term" value="P:glycerol-3-phosphate catabolic process"/>
    <property type="evidence" value="ECO:0007669"/>
    <property type="project" value="InterPro"/>
</dbReference>
<dbReference type="GO" id="GO:0006650">
    <property type="term" value="P:glycerophospholipid metabolic process"/>
    <property type="evidence" value="ECO:0007669"/>
    <property type="project" value="UniProtKB-UniRule"/>
</dbReference>
<dbReference type="GO" id="GO:0008654">
    <property type="term" value="P:phospholipid biosynthetic process"/>
    <property type="evidence" value="ECO:0007669"/>
    <property type="project" value="UniProtKB-KW"/>
</dbReference>
<dbReference type="FunFam" id="1.10.1040.10:FF:000001">
    <property type="entry name" value="Glycerol-3-phosphate dehydrogenase [NAD(P)+]"/>
    <property type="match status" value="1"/>
</dbReference>
<dbReference type="FunFam" id="3.40.50.720:FF:000019">
    <property type="entry name" value="Glycerol-3-phosphate dehydrogenase [NAD(P)+]"/>
    <property type="match status" value="1"/>
</dbReference>
<dbReference type="Gene3D" id="1.10.1040.10">
    <property type="entry name" value="N-(1-d-carboxylethyl)-l-norvaline Dehydrogenase, domain 2"/>
    <property type="match status" value="1"/>
</dbReference>
<dbReference type="Gene3D" id="3.40.50.720">
    <property type="entry name" value="NAD(P)-binding Rossmann-like Domain"/>
    <property type="match status" value="1"/>
</dbReference>
<dbReference type="HAMAP" id="MF_00394">
    <property type="entry name" value="NAD_Glyc3P_dehydrog"/>
    <property type="match status" value="1"/>
</dbReference>
<dbReference type="InterPro" id="IPR008927">
    <property type="entry name" value="6-PGluconate_DH-like_C_sf"/>
</dbReference>
<dbReference type="InterPro" id="IPR013328">
    <property type="entry name" value="6PGD_dom2"/>
</dbReference>
<dbReference type="InterPro" id="IPR006168">
    <property type="entry name" value="G3P_DH_NAD-dep"/>
</dbReference>
<dbReference type="InterPro" id="IPR006109">
    <property type="entry name" value="G3P_DH_NAD-dep_C"/>
</dbReference>
<dbReference type="InterPro" id="IPR011128">
    <property type="entry name" value="G3P_DH_NAD-dep_N"/>
</dbReference>
<dbReference type="InterPro" id="IPR036291">
    <property type="entry name" value="NAD(P)-bd_dom_sf"/>
</dbReference>
<dbReference type="NCBIfam" id="NF000940">
    <property type="entry name" value="PRK00094.1-2"/>
    <property type="match status" value="1"/>
</dbReference>
<dbReference type="NCBIfam" id="NF000942">
    <property type="entry name" value="PRK00094.1-4"/>
    <property type="match status" value="1"/>
</dbReference>
<dbReference type="PANTHER" id="PTHR11728">
    <property type="entry name" value="GLYCEROL-3-PHOSPHATE DEHYDROGENASE"/>
    <property type="match status" value="1"/>
</dbReference>
<dbReference type="PANTHER" id="PTHR11728:SF1">
    <property type="entry name" value="GLYCEROL-3-PHOSPHATE DEHYDROGENASE [NAD(+)] 2, CHLOROPLASTIC"/>
    <property type="match status" value="1"/>
</dbReference>
<dbReference type="Pfam" id="PF07479">
    <property type="entry name" value="NAD_Gly3P_dh_C"/>
    <property type="match status" value="1"/>
</dbReference>
<dbReference type="Pfam" id="PF01210">
    <property type="entry name" value="NAD_Gly3P_dh_N"/>
    <property type="match status" value="1"/>
</dbReference>
<dbReference type="PIRSF" id="PIRSF000114">
    <property type="entry name" value="Glycerol-3-P_dh"/>
    <property type="match status" value="1"/>
</dbReference>
<dbReference type="PRINTS" id="PR00077">
    <property type="entry name" value="GPDHDRGNASE"/>
</dbReference>
<dbReference type="SUPFAM" id="SSF48179">
    <property type="entry name" value="6-phosphogluconate dehydrogenase C-terminal domain-like"/>
    <property type="match status" value="1"/>
</dbReference>
<dbReference type="SUPFAM" id="SSF51735">
    <property type="entry name" value="NAD(P)-binding Rossmann-fold domains"/>
    <property type="match status" value="1"/>
</dbReference>
<dbReference type="PROSITE" id="PS00957">
    <property type="entry name" value="NAD_G3PDH"/>
    <property type="match status" value="1"/>
</dbReference>
<proteinExistence type="inferred from homology"/>
<feature type="chain" id="PRO_0000138001" description="Glycerol-3-phosphate dehydrogenase [NAD(P)+]">
    <location>
        <begin position="1"/>
        <end position="336"/>
    </location>
</feature>
<feature type="active site" description="Proton acceptor" evidence="1">
    <location>
        <position position="195"/>
    </location>
</feature>
<feature type="binding site" evidence="1">
    <location>
        <position position="11"/>
    </location>
    <ligand>
        <name>NADPH</name>
        <dbReference type="ChEBI" id="CHEBI:57783"/>
    </ligand>
</feature>
<feature type="binding site" evidence="1">
    <location>
        <position position="12"/>
    </location>
    <ligand>
        <name>NADPH</name>
        <dbReference type="ChEBI" id="CHEBI:57783"/>
    </ligand>
</feature>
<feature type="binding site" evidence="1">
    <location>
        <position position="32"/>
    </location>
    <ligand>
        <name>NADPH</name>
        <dbReference type="ChEBI" id="CHEBI:57783"/>
    </ligand>
</feature>
<feature type="binding site" evidence="1">
    <location>
        <position position="33"/>
    </location>
    <ligand>
        <name>NADPH</name>
        <dbReference type="ChEBI" id="CHEBI:57783"/>
    </ligand>
</feature>
<feature type="binding site" evidence="1">
    <location>
        <position position="110"/>
    </location>
    <ligand>
        <name>NADPH</name>
        <dbReference type="ChEBI" id="CHEBI:57783"/>
    </ligand>
</feature>
<feature type="binding site" evidence="1">
    <location>
        <position position="110"/>
    </location>
    <ligand>
        <name>sn-glycerol 3-phosphate</name>
        <dbReference type="ChEBI" id="CHEBI:57597"/>
    </ligand>
</feature>
<feature type="binding site" evidence="1">
    <location>
        <position position="140"/>
    </location>
    <ligand>
        <name>sn-glycerol 3-phosphate</name>
        <dbReference type="ChEBI" id="CHEBI:57597"/>
    </ligand>
</feature>
<feature type="binding site" evidence="1">
    <location>
        <position position="144"/>
    </location>
    <ligand>
        <name>NADPH</name>
        <dbReference type="ChEBI" id="CHEBI:57783"/>
    </ligand>
</feature>
<feature type="binding site" evidence="1">
    <location>
        <position position="195"/>
    </location>
    <ligand>
        <name>sn-glycerol 3-phosphate</name>
        <dbReference type="ChEBI" id="CHEBI:57597"/>
    </ligand>
</feature>
<feature type="binding site" evidence="1">
    <location>
        <position position="248"/>
    </location>
    <ligand>
        <name>sn-glycerol 3-phosphate</name>
        <dbReference type="ChEBI" id="CHEBI:57597"/>
    </ligand>
</feature>
<feature type="binding site" evidence="1">
    <location>
        <position position="258"/>
    </location>
    <ligand>
        <name>sn-glycerol 3-phosphate</name>
        <dbReference type="ChEBI" id="CHEBI:57597"/>
    </ligand>
</feature>
<feature type="binding site" evidence="1">
    <location>
        <position position="259"/>
    </location>
    <ligand>
        <name>NADPH</name>
        <dbReference type="ChEBI" id="CHEBI:57783"/>
    </ligand>
</feature>
<feature type="binding site" evidence="1">
    <location>
        <position position="259"/>
    </location>
    <ligand>
        <name>sn-glycerol 3-phosphate</name>
        <dbReference type="ChEBI" id="CHEBI:57597"/>
    </ligand>
</feature>
<feature type="binding site" evidence="1">
    <location>
        <position position="260"/>
    </location>
    <ligand>
        <name>sn-glycerol 3-phosphate</name>
        <dbReference type="ChEBI" id="CHEBI:57597"/>
    </ligand>
</feature>
<feature type="binding site" evidence="1">
    <location>
        <position position="284"/>
    </location>
    <ligand>
        <name>NADPH</name>
        <dbReference type="ChEBI" id="CHEBI:57783"/>
    </ligand>
</feature>
<feature type="binding site" evidence="1">
    <location>
        <position position="286"/>
    </location>
    <ligand>
        <name>NADPH</name>
        <dbReference type="ChEBI" id="CHEBI:57783"/>
    </ligand>
</feature>
<sequence length="336" mass="34506">MTRAAVLGAGSWGTAFAKVLADAGTEVTIWARRPEIAEALATEHRNPAYLPDVQLPAVSATHDAEAALDGAQLVVLAVPSQSLRANLTGWRPALRAAIDEHDATLLSLAKGIETGTLLRMSQVIAEVTGAEERRIAVLSGPNLAREIAAGQPAATVIACSDAARAEAVQQASYTGYFRPYTNTDVIGCEIGGACKNVIALACGIAAGMGLGDNSIASLITRGLAEIMRLAVTLGAEPVTLAGLAGVGDLVATCTSPLSRNRSFGHVLGAGGSMEAAQQATHGQVAEGVKSCTSVRALAAAHEVEMPLTDAVHRVCHEGISVREAVGSLLGRRIKPE</sequence>
<evidence type="ECO:0000255" key="1">
    <source>
        <dbReference type="HAMAP-Rule" id="MF_00394"/>
    </source>
</evidence>
<comment type="function">
    <text evidence="1">Catalyzes the reduction of the glycolytic intermediate dihydroxyacetone phosphate (DHAP) to sn-glycerol 3-phosphate (G3P), the key precursor for phospholipid synthesis.</text>
</comment>
<comment type="catalytic activity">
    <reaction evidence="1">
        <text>sn-glycerol 3-phosphate + NAD(+) = dihydroxyacetone phosphate + NADH + H(+)</text>
        <dbReference type="Rhea" id="RHEA:11092"/>
        <dbReference type="ChEBI" id="CHEBI:15378"/>
        <dbReference type="ChEBI" id="CHEBI:57540"/>
        <dbReference type="ChEBI" id="CHEBI:57597"/>
        <dbReference type="ChEBI" id="CHEBI:57642"/>
        <dbReference type="ChEBI" id="CHEBI:57945"/>
        <dbReference type="EC" id="1.1.1.94"/>
    </reaction>
    <physiologicalReaction direction="right-to-left" evidence="1">
        <dbReference type="Rhea" id="RHEA:11094"/>
    </physiologicalReaction>
</comment>
<comment type="catalytic activity">
    <reaction evidence="1">
        <text>sn-glycerol 3-phosphate + NADP(+) = dihydroxyacetone phosphate + NADPH + H(+)</text>
        <dbReference type="Rhea" id="RHEA:11096"/>
        <dbReference type="ChEBI" id="CHEBI:15378"/>
        <dbReference type="ChEBI" id="CHEBI:57597"/>
        <dbReference type="ChEBI" id="CHEBI:57642"/>
        <dbReference type="ChEBI" id="CHEBI:57783"/>
        <dbReference type="ChEBI" id="CHEBI:58349"/>
        <dbReference type="EC" id="1.1.1.94"/>
    </reaction>
    <physiologicalReaction direction="right-to-left" evidence="1">
        <dbReference type="Rhea" id="RHEA:11098"/>
    </physiologicalReaction>
</comment>
<comment type="pathway">
    <text evidence="1">Membrane lipid metabolism; glycerophospholipid metabolism.</text>
</comment>
<comment type="subcellular location">
    <subcellularLocation>
        <location evidence="1">Cytoplasm</location>
    </subcellularLocation>
</comment>
<comment type="similarity">
    <text evidence="1">Belongs to the NAD-dependent glycerol-3-phosphate dehydrogenase family.</text>
</comment>
<protein>
    <recommendedName>
        <fullName evidence="1">Glycerol-3-phosphate dehydrogenase [NAD(P)+]</fullName>
        <ecNumber evidence="1">1.1.1.94</ecNumber>
    </recommendedName>
    <alternativeName>
        <fullName evidence="1">NAD(P)(+)-dependent glycerol-3-phosphate dehydrogenase</fullName>
    </alternativeName>
    <alternativeName>
        <fullName evidence="1">NAD(P)H-dependent dihydroxyacetone-phosphate reductase</fullName>
    </alternativeName>
</protein>
<reference key="1">
    <citation type="journal article" date="2004" name="Proc. Natl. Acad. Sci. U.S.A.">
        <title>The complete genomic sequence of Nocardia farcinica IFM 10152.</title>
        <authorList>
            <person name="Ishikawa J."/>
            <person name="Yamashita A."/>
            <person name="Mikami Y."/>
            <person name="Hoshino Y."/>
            <person name="Kurita H."/>
            <person name="Hotta K."/>
            <person name="Shiba T."/>
            <person name="Hattori M."/>
        </authorList>
    </citation>
    <scope>NUCLEOTIDE SEQUENCE [LARGE SCALE GENOMIC DNA]</scope>
    <source>
        <strain>IFM 10152</strain>
    </source>
</reference>
<organism>
    <name type="scientific">Nocardia farcinica (strain IFM 10152)</name>
    <dbReference type="NCBI Taxonomy" id="247156"/>
    <lineage>
        <taxon>Bacteria</taxon>
        <taxon>Bacillati</taxon>
        <taxon>Actinomycetota</taxon>
        <taxon>Actinomycetes</taxon>
        <taxon>Mycobacteriales</taxon>
        <taxon>Nocardiaceae</taxon>
        <taxon>Nocardia</taxon>
    </lineage>
</organism>